<proteinExistence type="inferred from homology"/>
<protein>
    <recommendedName>
        <fullName evidence="1">Ribosomal RNA small subunit methyltransferase H</fullName>
        <ecNumber evidence="1">2.1.1.199</ecNumber>
    </recommendedName>
    <alternativeName>
        <fullName evidence="1">16S rRNA m(4)C1402 methyltransferase</fullName>
    </alternativeName>
    <alternativeName>
        <fullName evidence="1">rRNA (cytosine-N(4)-)-methyltransferase RsmH</fullName>
    </alternativeName>
</protein>
<evidence type="ECO:0000255" key="1">
    <source>
        <dbReference type="HAMAP-Rule" id="MF_01007"/>
    </source>
</evidence>
<feature type="chain" id="PRO_0000223553" description="Ribosomal RNA small subunit methyltransferase H">
    <location>
        <begin position="1"/>
        <end position="304"/>
    </location>
</feature>
<feature type="binding site" evidence="1">
    <location>
        <begin position="47"/>
        <end position="49"/>
    </location>
    <ligand>
        <name>S-adenosyl-L-methionine</name>
        <dbReference type="ChEBI" id="CHEBI:59789"/>
    </ligand>
</feature>
<feature type="binding site" evidence="1">
    <location>
        <position position="66"/>
    </location>
    <ligand>
        <name>S-adenosyl-L-methionine</name>
        <dbReference type="ChEBI" id="CHEBI:59789"/>
    </ligand>
</feature>
<feature type="binding site" evidence="1">
    <location>
        <position position="93"/>
    </location>
    <ligand>
        <name>S-adenosyl-L-methionine</name>
        <dbReference type="ChEBI" id="CHEBI:59789"/>
    </ligand>
</feature>
<feature type="binding site" evidence="1">
    <location>
        <position position="108"/>
    </location>
    <ligand>
        <name>S-adenosyl-L-methionine</name>
        <dbReference type="ChEBI" id="CHEBI:59789"/>
    </ligand>
</feature>
<feature type="binding site" evidence="1">
    <location>
        <position position="115"/>
    </location>
    <ligand>
        <name>S-adenosyl-L-methionine</name>
        <dbReference type="ChEBI" id="CHEBI:59789"/>
    </ligand>
</feature>
<gene>
    <name evidence="1" type="primary">rsmH</name>
    <name type="synonym">mraW</name>
    <name type="ordered locus">PMN2A_1539</name>
</gene>
<dbReference type="EC" id="2.1.1.199" evidence="1"/>
<dbReference type="EMBL" id="CP000095">
    <property type="protein sequence ID" value="AAZ59027.1"/>
    <property type="molecule type" value="Genomic_DNA"/>
</dbReference>
<dbReference type="RefSeq" id="WP_011294172.1">
    <property type="nucleotide sequence ID" value="NC_007335.2"/>
</dbReference>
<dbReference type="SMR" id="Q46HK1"/>
<dbReference type="STRING" id="59920.PMN2A_1539"/>
<dbReference type="KEGG" id="pmn:PMN2A_1539"/>
<dbReference type="HOGENOM" id="CLU_038422_3_0_3"/>
<dbReference type="OrthoDB" id="9806637at2"/>
<dbReference type="PhylomeDB" id="Q46HK1"/>
<dbReference type="Proteomes" id="UP000002535">
    <property type="component" value="Chromosome"/>
</dbReference>
<dbReference type="GO" id="GO:0005737">
    <property type="term" value="C:cytoplasm"/>
    <property type="evidence" value="ECO:0007669"/>
    <property type="project" value="UniProtKB-SubCell"/>
</dbReference>
<dbReference type="GO" id="GO:0071424">
    <property type="term" value="F:rRNA (cytosine-N4-)-methyltransferase activity"/>
    <property type="evidence" value="ECO:0007669"/>
    <property type="project" value="UniProtKB-UniRule"/>
</dbReference>
<dbReference type="GO" id="GO:0070475">
    <property type="term" value="P:rRNA base methylation"/>
    <property type="evidence" value="ECO:0007669"/>
    <property type="project" value="UniProtKB-UniRule"/>
</dbReference>
<dbReference type="CDD" id="cd02440">
    <property type="entry name" value="AdoMet_MTases"/>
    <property type="match status" value="1"/>
</dbReference>
<dbReference type="Gene3D" id="1.10.150.170">
    <property type="entry name" value="Putative methyltransferase TM0872, insert domain"/>
    <property type="match status" value="1"/>
</dbReference>
<dbReference type="Gene3D" id="3.40.50.150">
    <property type="entry name" value="Vaccinia Virus protein VP39"/>
    <property type="match status" value="1"/>
</dbReference>
<dbReference type="HAMAP" id="MF_01007">
    <property type="entry name" value="16SrRNA_methyltr_H"/>
    <property type="match status" value="1"/>
</dbReference>
<dbReference type="InterPro" id="IPR002903">
    <property type="entry name" value="RsmH"/>
</dbReference>
<dbReference type="InterPro" id="IPR023397">
    <property type="entry name" value="SAM-dep_MeTrfase_MraW_recog"/>
</dbReference>
<dbReference type="InterPro" id="IPR029063">
    <property type="entry name" value="SAM-dependent_MTases_sf"/>
</dbReference>
<dbReference type="NCBIfam" id="TIGR00006">
    <property type="entry name" value="16S rRNA (cytosine(1402)-N(4))-methyltransferase RsmH"/>
    <property type="match status" value="1"/>
</dbReference>
<dbReference type="PANTHER" id="PTHR11265:SF0">
    <property type="entry name" value="12S RRNA N4-METHYLCYTIDINE METHYLTRANSFERASE"/>
    <property type="match status" value="1"/>
</dbReference>
<dbReference type="PANTHER" id="PTHR11265">
    <property type="entry name" value="S-ADENOSYL-METHYLTRANSFERASE MRAW"/>
    <property type="match status" value="1"/>
</dbReference>
<dbReference type="Pfam" id="PF01795">
    <property type="entry name" value="Methyltransf_5"/>
    <property type="match status" value="1"/>
</dbReference>
<dbReference type="PIRSF" id="PIRSF004486">
    <property type="entry name" value="MraW"/>
    <property type="match status" value="1"/>
</dbReference>
<dbReference type="SUPFAM" id="SSF81799">
    <property type="entry name" value="Putative methyltransferase TM0872, insert domain"/>
    <property type="match status" value="1"/>
</dbReference>
<dbReference type="SUPFAM" id="SSF53335">
    <property type="entry name" value="S-adenosyl-L-methionine-dependent methyltransferases"/>
    <property type="match status" value="1"/>
</dbReference>
<organism>
    <name type="scientific">Prochlorococcus marinus (strain NATL2A)</name>
    <dbReference type="NCBI Taxonomy" id="59920"/>
    <lineage>
        <taxon>Bacteria</taxon>
        <taxon>Bacillati</taxon>
        <taxon>Cyanobacteriota</taxon>
        <taxon>Cyanophyceae</taxon>
        <taxon>Synechococcales</taxon>
        <taxon>Prochlorococcaceae</taxon>
        <taxon>Prochlorococcus</taxon>
    </lineage>
</organism>
<accession>Q46HK1</accession>
<reference key="1">
    <citation type="journal article" date="2007" name="PLoS Genet.">
        <title>Patterns and implications of gene gain and loss in the evolution of Prochlorococcus.</title>
        <authorList>
            <person name="Kettler G.C."/>
            <person name="Martiny A.C."/>
            <person name="Huang K."/>
            <person name="Zucker J."/>
            <person name="Coleman M.L."/>
            <person name="Rodrigue S."/>
            <person name="Chen F."/>
            <person name="Lapidus A."/>
            <person name="Ferriera S."/>
            <person name="Johnson J."/>
            <person name="Steglich C."/>
            <person name="Church G.M."/>
            <person name="Richardson P."/>
            <person name="Chisholm S.W."/>
        </authorList>
    </citation>
    <scope>NUCLEOTIDE SEQUENCE [LARGE SCALE GENOMIC DNA]</scope>
    <source>
        <strain>NATL2A</strain>
    </source>
</reference>
<name>RSMH_PROMT</name>
<comment type="function">
    <text evidence="1">Specifically methylates the N4 position of cytidine in position 1402 (C1402) of 16S rRNA.</text>
</comment>
<comment type="catalytic activity">
    <reaction evidence="1">
        <text>cytidine(1402) in 16S rRNA + S-adenosyl-L-methionine = N(4)-methylcytidine(1402) in 16S rRNA + S-adenosyl-L-homocysteine + H(+)</text>
        <dbReference type="Rhea" id="RHEA:42928"/>
        <dbReference type="Rhea" id="RHEA-COMP:10286"/>
        <dbReference type="Rhea" id="RHEA-COMP:10287"/>
        <dbReference type="ChEBI" id="CHEBI:15378"/>
        <dbReference type="ChEBI" id="CHEBI:57856"/>
        <dbReference type="ChEBI" id="CHEBI:59789"/>
        <dbReference type="ChEBI" id="CHEBI:74506"/>
        <dbReference type="ChEBI" id="CHEBI:82748"/>
        <dbReference type="EC" id="2.1.1.199"/>
    </reaction>
</comment>
<comment type="subcellular location">
    <subcellularLocation>
        <location evidence="1">Cytoplasm</location>
    </subcellularLocation>
</comment>
<comment type="similarity">
    <text evidence="1">Belongs to the methyltransferase superfamily. RsmH family.</text>
</comment>
<keyword id="KW-0963">Cytoplasm</keyword>
<keyword id="KW-0489">Methyltransferase</keyword>
<keyword id="KW-1185">Reference proteome</keyword>
<keyword id="KW-0698">rRNA processing</keyword>
<keyword id="KW-0949">S-adenosyl-L-methionine</keyword>
<keyword id="KW-0808">Transferase</keyword>
<sequence>MKEGPISSSSNFNHIPVMGKEIIRSLKELPSELTKKGLIIDATIGGGGHSAQILENFPGIKIIGLDQDPMAIKAASKKLIKFGTRIEIISTNFADFSHHEQAICVLADLGVSSHQLDEPSRGFSFRLNGPIDMRMNPKEGSSAAELIETLSEQNLADLIYELGEEKRSRRIARKIKNDLAENGPYSGTQDLSYAIAGCFPPKQRYGRIHPSTRTFQALRIAVNNELGSLESLLLKAPNWLLENGLFMVMSFHSLEDRRVKSSFKTDNRLKVLSKKPIRASPEEIELNPRSKSAKLRISAKKFLT</sequence>